<gene>
    <name type="primary">FPS1</name>
</gene>
<evidence type="ECO:0000250" key="1"/>
<evidence type="ECO:0000250" key="2">
    <source>
        <dbReference type="UniProtKB" id="P14324"/>
    </source>
</evidence>
<evidence type="ECO:0000305" key="3"/>
<feature type="chain" id="PRO_0000123956" description="Farnesyl pyrophosphate synthase 1">
    <location>
        <begin position="1"/>
        <end position="342"/>
    </location>
</feature>
<feature type="binding site" evidence="2">
    <location>
        <position position="47"/>
    </location>
    <ligand>
        <name>isopentenyl diphosphate</name>
        <dbReference type="ChEBI" id="CHEBI:128769"/>
    </ligand>
</feature>
<feature type="binding site" evidence="2">
    <location>
        <position position="50"/>
    </location>
    <ligand>
        <name>isopentenyl diphosphate</name>
        <dbReference type="ChEBI" id="CHEBI:128769"/>
    </ligand>
</feature>
<feature type="binding site" evidence="2">
    <location>
        <position position="86"/>
    </location>
    <ligand>
        <name>isopentenyl diphosphate</name>
        <dbReference type="ChEBI" id="CHEBI:128769"/>
    </ligand>
</feature>
<feature type="binding site" evidence="2">
    <location>
        <position position="93"/>
    </location>
    <ligand>
        <name>Mg(2+)</name>
        <dbReference type="ChEBI" id="CHEBI:18420"/>
        <label>1</label>
    </ligand>
</feature>
<feature type="binding site" evidence="2">
    <location>
        <position position="93"/>
    </location>
    <ligand>
        <name>Mg(2+)</name>
        <dbReference type="ChEBI" id="CHEBI:18420"/>
        <label>2</label>
    </ligand>
</feature>
<feature type="binding site" evidence="2">
    <location>
        <position position="97"/>
    </location>
    <ligand>
        <name>Mg(2+)</name>
        <dbReference type="ChEBI" id="CHEBI:18420"/>
        <label>1</label>
    </ligand>
</feature>
<feature type="binding site" evidence="2">
    <location>
        <position position="97"/>
    </location>
    <ligand>
        <name>Mg(2+)</name>
        <dbReference type="ChEBI" id="CHEBI:18420"/>
        <label>2</label>
    </ligand>
</feature>
<feature type="binding site" evidence="1">
    <location>
        <position position="102"/>
    </location>
    <ligand>
        <name>dimethylallyl diphosphate</name>
        <dbReference type="ChEBI" id="CHEBI:57623"/>
    </ligand>
</feature>
<feature type="binding site" evidence="2">
    <location>
        <position position="103"/>
    </location>
    <ligand>
        <name>isopentenyl diphosphate</name>
        <dbReference type="ChEBI" id="CHEBI:128769"/>
    </ligand>
</feature>
<feature type="binding site" evidence="1">
    <location>
        <position position="190"/>
    </location>
    <ligand>
        <name>dimethylallyl diphosphate</name>
        <dbReference type="ChEBI" id="CHEBI:57623"/>
    </ligand>
</feature>
<feature type="binding site" evidence="1">
    <location>
        <position position="191"/>
    </location>
    <ligand>
        <name>dimethylallyl diphosphate</name>
        <dbReference type="ChEBI" id="CHEBI:57623"/>
    </ligand>
</feature>
<feature type="binding site" evidence="1">
    <location>
        <position position="229"/>
    </location>
    <ligand>
        <name>dimethylallyl diphosphate</name>
        <dbReference type="ChEBI" id="CHEBI:57623"/>
    </ligand>
</feature>
<feature type="binding site" evidence="1">
    <location>
        <position position="246"/>
    </location>
    <ligand>
        <name>dimethylallyl diphosphate</name>
        <dbReference type="ChEBI" id="CHEBI:57623"/>
    </ligand>
</feature>
<feature type="binding site" evidence="1">
    <location>
        <position position="255"/>
    </location>
    <ligand>
        <name>dimethylallyl diphosphate</name>
        <dbReference type="ChEBI" id="CHEBI:57623"/>
    </ligand>
</feature>
<keyword id="KW-0152">Cholesterol biosynthesis</keyword>
<keyword id="KW-0153">Cholesterol metabolism</keyword>
<keyword id="KW-0963">Cytoplasm</keyword>
<keyword id="KW-0414">Isoprene biosynthesis</keyword>
<keyword id="KW-0444">Lipid biosynthesis</keyword>
<keyword id="KW-0443">Lipid metabolism</keyword>
<keyword id="KW-0460">Magnesium</keyword>
<keyword id="KW-0479">Metal-binding</keyword>
<keyword id="KW-0752">Steroid biosynthesis</keyword>
<keyword id="KW-0753">Steroid metabolism</keyword>
<keyword id="KW-0756">Sterol biosynthesis</keyword>
<keyword id="KW-1207">Sterol metabolism</keyword>
<keyword id="KW-0808">Transferase</keyword>
<organism>
    <name type="scientific">Lupinus albus</name>
    <name type="common">White lupine</name>
    <name type="synonym">Lupinus termis</name>
    <dbReference type="NCBI Taxonomy" id="3870"/>
    <lineage>
        <taxon>Eukaryota</taxon>
        <taxon>Viridiplantae</taxon>
        <taxon>Streptophyta</taxon>
        <taxon>Embryophyta</taxon>
        <taxon>Tracheophyta</taxon>
        <taxon>Spermatophyta</taxon>
        <taxon>Magnoliopsida</taxon>
        <taxon>eudicotyledons</taxon>
        <taxon>Gunneridae</taxon>
        <taxon>Pentapetalae</taxon>
        <taxon>rosids</taxon>
        <taxon>fabids</taxon>
        <taxon>Fabales</taxon>
        <taxon>Fabaceae</taxon>
        <taxon>Papilionoideae</taxon>
        <taxon>50 kb inversion clade</taxon>
        <taxon>genistoids sensu lato</taxon>
        <taxon>core genistoids</taxon>
        <taxon>Genisteae</taxon>
        <taxon>Lupinus</taxon>
    </lineage>
</organism>
<name>FPPS1_LUPAL</name>
<reference key="1">
    <citation type="journal article" date="1995" name="Arch. Biochem. Biophys.">
        <title>Farnesyl pyrophosphate synthase from white lupin: molecular cloning, expression, and purification of the expressed protein.</title>
        <authorList>
            <person name="Attucci S."/>
            <person name="Aitken S.M."/>
            <person name="Gulick P.J."/>
            <person name="Ibrahim R.K."/>
        </authorList>
    </citation>
    <scope>NUCLEOTIDE SEQUENCE [MRNA]</scope>
    <source>
        <tissue>Root</tissue>
    </source>
</reference>
<proteinExistence type="evidence at transcript level"/>
<comment type="function">
    <text>Catalyzes the sequential condensation of isopentenyl pyrophosphate with the allylic pyrophosphates, dimethylallyl pyrophosphate, and then with the resultant geranylpyrophosphate to the ultimate product farnesyl pyrophosphate.</text>
</comment>
<comment type="catalytic activity">
    <reaction>
        <text>isopentenyl diphosphate + dimethylallyl diphosphate = (2E)-geranyl diphosphate + diphosphate</text>
        <dbReference type="Rhea" id="RHEA:22408"/>
        <dbReference type="ChEBI" id="CHEBI:33019"/>
        <dbReference type="ChEBI" id="CHEBI:57623"/>
        <dbReference type="ChEBI" id="CHEBI:58057"/>
        <dbReference type="ChEBI" id="CHEBI:128769"/>
        <dbReference type="EC" id="2.5.1.1"/>
    </reaction>
</comment>
<comment type="catalytic activity">
    <reaction>
        <text>isopentenyl diphosphate + (2E)-geranyl diphosphate = (2E,6E)-farnesyl diphosphate + diphosphate</text>
        <dbReference type="Rhea" id="RHEA:19361"/>
        <dbReference type="ChEBI" id="CHEBI:33019"/>
        <dbReference type="ChEBI" id="CHEBI:58057"/>
        <dbReference type="ChEBI" id="CHEBI:128769"/>
        <dbReference type="ChEBI" id="CHEBI:175763"/>
        <dbReference type="EC" id="2.5.1.10"/>
    </reaction>
</comment>
<comment type="cofactor">
    <cofactor evidence="1">
        <name>Mg(2+)</name>
        <dbReference type="ChEBI" id="CHEBI:18420"/>
    </cofactor>
    <text evidence="1">Binds 2 Mg(2+) ions per subunit.</text>
</comment>
<comment type="pathway">
    <text>Isoprenoid biosynthesis; farnesyl diphosphate biosynthesis; farnesyl diphosphate from geranyl diphosphate and isopentenyl diphosphate: step 1/1.</text>
</comment>
<comment type="pathway">
    <text>Isoprenoid biosynthesis; geranyl diphosphate biosynthesis; geranyl diphosphate from dimethylallyl diphosphate and isopentenyl diphosphate: step 1/1.</text>
</comment>
<comment type="subcellular location">
    <subcellularLocation>
        <location evidence="1">Cytoplasm</location>
    </subcellularLocation>
</comment>
<comment type="similarity">
    <text evidence="3">Belongs to the FPP/GGPP synthase family.</text>
</comment>
<protein>
    <recommendedName>
        <fullName>Farnesyl pyrophosphate synthase 1</fullName>
        <shortName>FPP synthase 1</shortName>
        <shortName>FPS 1</shortName>
        <ecNumber>2.5.1.10</ecNumber>
    </recommendedName>
    <alternativeName>
        <fullName>(2E,6E)-farnesyl diphosphate synthase 1</fullName>
    </alternativeName>
    <alternativeName>
        <fullName>Dimethylallyltranstransferase 1</fullName>
        <ecNumber>2.5.1.1</ecNumber>
    </alternativeName>
    <alternativeName>
        <fullName>Farnesyl diphosphate synthase 1</fullName>
    </alternativeName>
    <alternativeName>
        <fullName>Geranyltranstransferase 1</fullName>
    </alternativeName>
</protein>
<dbReference type="EC" id="2.5.1.10"/>
<dbReference type="EC" id="2.5.1.1"/>
<dbReference type="EMBL" id="U15777">
    <property type="protein sequence ID" value="AAA86687.1"/>
    <property type="molecule type" value="mRNA"/>
</dbReference>
<dbReference type="PIR" id="S66470">
    <property type="entry name" value="S66470"/>
</dbReference>
<dbReference type="SMR" id="P49351"/>
<dbReference type="OrthoDB" id="10257492at2759"/>
<dbReference type="UniPathway" id="UPA00259">
    <property type="reaction ID" value="UER00368"/>
</dbReference>
<dbReference type="UniPathway" id="UPA00260">
    <property type="reaction ID" value="UER00369"/>
</dbReference>
<dbReference type="GO" id="GO:0005737">
    <property type="term" value="C:cytoplasm"/>
    <property type="evidence" value="ECO:0007669"/>
    <property type="project" value="UniProtKB-SubCell"/>
</dbReference>
<dbReference type="GO" id="GO:0004337">
    <property type="term" value="F:(2E,6E)-farnesyl diphosphate synthase activity"/>
    <property type="evidence" value="ECO:0007669"/>
    <property type="project" value="UniProtKB-EC"/>
</dbReference>
<dbReference type="GO" id="GO:0004161">
    <property type="term" value="F:dimethylallyltranstransferase activity"/>
    <property type="evidence" value="ECO:0007669"/>
    <property type="project" value="UniProtKB-EC"/>
</dbReference>
<dbReference type="GO" id="GO:0046872">
    <property type="term" value="F:metal ion binding"/>
    <property type="evidence" value="ECO:0007669"/>
    <property type="project" value="UniProtKB-KW"/>
</dbReference>
<dbReference type="GO" id="GO:0006695">
    <property type="term" value="P:cholesterol biosynthetic process"/>
    <property type="evidence" value="ECO:0007669"/>
    <property type="project" value="UniProtKB-KW"/>
</dbReference>
<dbReference type="GO" id="GO:0045337">
    <property type="term" value="P:farnesyl diphosphate biosynthetic process"/>
    <property type="evidence" value="ECO:0007669"/>
    <property type="project" value="UniProtKB-UniPathway"/>
</dbReference>
<dbReference type="GO" id="GO:0033384">
    <property type="term" value="P:geranyl diphosphate biosynthetic process"/>
    <property type="evidence" value="ECO:0007669"/>
    <property type="project" value="UniProtKB-UniPathway"/>
</dbReference>
<dbReference type="CDD" id="cd00685">
    <property type="entry name" value="Trans_IPPS_HT"/>
    <property type="match status" value="1"/>
</dbReference>
<dbReference type="FunFam" id="1.10.600.10:FF:000008">
    <property type="entry name" value="Farnesyl pyrophosphate synthase"/>
    <property type="match status" value="1"/>
</dbReference>
<dbReference type="Gene3D" id="1.10.600.10">
    <property type="entry name" value="Farnesyl Diphosphate Synthase"/>
    <property type="match status" value="1"/>
</dbReference>
<dbReference type="InterPro" id="IPR039702">
    <property type="entry name" value="FPS1-like"/>
</dbReference>
<dbReference type="InterPro" id="IPR008949">
    <property type="entry name" value="Isoprenoid_synthase_dom_sf"/>
</dbReference>
<dbReference type="InterPro" id="IPR000092">
    <property type="entry name" value="Polyprenyl_synt"/>
</dbReference>
<dbReference type="InterPro" id="IPR033749">
    <property type="entry name" value="Polyprenyl_synt_CS"/>
</dbReference>
<dbReference type="PANTHER" id="PTHR11525:SF0">
    <property type="entry name" value="FARNESYL PYROPHOSPHATE SYNTHASE"/>
    <property type="match status" value="1"/>
</dbReference>
<dbReference type="PANTHER" id="PTHR11525">
    <property type="entry name" value="FARNESYL-PYROPHOSPHATE SYNTHETASE"/>
    <property type="match status" value="1"/>
</dbReference>
<dbReference type="Pfam" id="PF00348">
    <property type="entry name" value="polyprenyl_synt"/>
    <property type="match status" value="1"/>
</dbReference>
<dbReference type="SFLD" id="SFLDS00005">
    <property type="entry name" value="Isoprenoid_Synthase_Type_I"/>
    <property type="match status" value="1"/>
</dbReference>
<dbReference type="SFLD" id="SFLDG01017">
    <property type="entry name" value="Polyprenyl_Transferase_Like"/>
    <property type="match status" value="1"/>
</dbReference>
<dbReference type="SUPFAM" id="SSF48576">
    <property type="entry name" value="Terpenoid synthases"/>
    <property type="match status" value="1"/>
</dbReference>
<dbReference type="PROSITE" id="PS00723">
    <property type="entry name" value="POLYPRENYL_SYNTHASE_1"/>
    <property type="match status" value="1"/>
</dbReference>
<dbReference type="PROSITE" id="PS00444">
    <property type="entry name" value="POLYPRENYL_SYNTHASE_2"/>
    <property type="match status" value="1"/>
</dbReference>
<sequence>MADLRSTFLNVYSVLKSELLHDPAFEFSPDSRQWLDRMLDYNVPGGKLNRGLSVIDSYRLLKDGHELNDDEIFLASALGWCIEWLQAYFLVLDDIMDNSHTRRGQPCWFRVPKVGMIAANDGVLLRNHIPRILKKHFRGKPYYADLLDLFNEVEFQTASGQMIDLITTLEGEKDLSKYTLSLHRRIVQYKTAYYSFYLPVACALLMVGENLDNHIDVKNILVDMGTYFQVQDDYLDCFGAPETIGKIGTDIEDFKCSWLVVKALELSNDEQKKVLYDNYGKPDPANVAKVKALYDELNLQGVFTEYESKSYEKLVTSIEAHPSKAVQALLKSFLGKIYKRQK</sequence>
<accession>P49351</accession>